<reference key="1">
    <citation type="journal article" date="2005" name="Genome Biol.">
        <title>Full-length cDNAs from chicken bursal lymphocytes to facilitate gene function analysis.</title>
        <authorList>
            <person name="Caldwell R.B."/>
            <person name="Kierzek A.M."/>
            <person name="Arakawa H."/>
            <person name="Bezzubov Y."/>
            <person name="Zaim J."/>
            <person name="Fiedler P."/>
            <person name="Kutter S."/>
            <person name="Blagodatski A."/>
            <person name="Kostovska D."/>
            <person name="Koter M."/>
            <person name="Plachy J."/>
            <person name="Carninci P."/>
            <person name="Hayashizaki Y."/>
            <person name="Buerstedde J.-M."/>
        </authorList>
    </citation>
    <scope>NUCLEOTIDE SEQUENCE [LARGE SCALE MRNA]</scope>
    <source>
        <strain>CB</strain>
        <tissue>Bursa of Fabricius</tissue>
    </source>
</reference>
<comment type="function">
    <text evidence="1">Ubiquitin-like protein that can be covalently attached to proteins as a monomer or as a lysine-linked polymer. Covalent attachment via an isopeptide bond to its substrates requires prior activation by the E1 complex SAE1-SAE2 and linkage to the E2 enzyme UBE2I, and can be promoted by an E3 ligase such as PIAS1-4. This post-translational modification on lysine residues of proteins plays a crucial role in a number of cellular processes such as nuclear transport, DNA replication and repair, mitosis and signal transduction. Polymeric SUMO2 chains are also susceptible to polyubiquitination which functions as a signal for proteasomal degradation of modified proteins (By similarity).</text>
</comment>
<comment type="subunit">
    <text evidence="1">Interacts with SAE2 and UBE2I. Covalently attached to a number of proteins (By similarity).</text>
</comment>
<comment type="subcellular location">
    <subcellularLocation>
        <location evidence="1">Nucleus</location>
    </subcellularLocation>
</comment>
<comment type="PTM">
    <text evidence="1">Polymeric chains can be formed through Lys-11 cross-linking.</text>
</comment>
<comment type="PTM">
    <text evidence="1">Cleavage of precursor form by a sentrin-specific protease is necessary for function.</text>
</comment>
<comment type="similarity">
    <text evidence="3">Belongs to the ubiquitin family. SUMO subfamily.</text>
</comment>
<keyword id="KW-1017">Isopeptide bond</keyword>
<keyword id="KW-0539">Nucleus</keyword>
<keyword id="KW-1185">Reference proteome</keyword>
<keyword id="KW-0832">Ubl conjugation</keyword>
<keyword id="KW-0833">Ubl conjugation pathway</keyword>
<dbReference type="EMBL" id="AJ720405">
    <property type="protein sequence ID" value="CAG32064.1"/>
    <property type="molecule type" value="mRNA"/>
</dbReference>
<dbReference type="RefSeq" id="NP_001074186.1">
    <property type="nucleotide sequence ID" value="NM_001080717.3"/>
</dbReference>
<dbReference type="SMR" id="Q5ZJM9"/>
<dbReference type="FunCoup" id="Q5ZJM9">
    <property type="interactions" value="2905"/>
</dbReference>
<dbReference type="STRING" id="9031.ENSGALP00000012928"/>
<dbReference type="PaxDb" id="9031-ENSGALP00000012928"/>
<dbReference type="GeneID" id="770125"/>
<dbReference type="KEGG" id="gga:770125"/>
<dbReference type="CTD" id="6613"/>
<dbReference type="VEuPathDB" id="HostDB:geneid_770125"/>
<dbReference type="eggNOG" id="KOG1769">
    <property type="taxonomic scope" value="Eukaryota"/>
</dbReference>
<dbReference type="HOGENOM" id="CLU_148322_2_1_1"/>
<dbReference type="InParanoid" id="Q5ZJM9"/>
<dbReference type="OMA" id="MKIYCAR"/>
<dbReference type="OrthoDB" id="442921at2759"/>
<dbReference type="PhylomeDB" id="Q5ZJM9"/>
<dbReference type="TreeFam" id="TF315116"/>
<dbReference type="Reactome" id="R-GGA-196791">
    <property type="pathway name" value="Vitamin D (calciferol) metabolism"/>
</dbReference>
<dbReference type="Reactome" id="R-GGA-3065679">
    <property type="pathway name" value="SUMO is proteolytically processed"/>
</dbReference>
<dbReference type="Reactome" id="R-GGA-3108214">
    <property type="pathway name" value="SUMOylation of DNA damage response and repair proteins"/>
</dbReference>
<dbReference type="Reactome" id="R-GGA-3232118">
    <property type="pathway name" value="SUMOylation of transcription factors"/>
</dbReference>
<dbReference type="Reactome" id="R-GGA-3899300">
    <property type="pathway name" value="SUMOylation of transcription cofactors"/>
</dbReference>
<dbReference type="Reactome" id="R-GGA-4085377">
    <property type="pathway name" value="SUMOylation of SUMOylation proteins"/>
</dbReference>
<dbReference type="Reactome" id="R-GGA-4090294">
    <property type="pathway name" value="SUMOylation of intracellular receptors"/>
</dbReference>
<dbReference type="Reactome" id="R-GGA-4551638">
    <property type="pathway name" value="SUMOylation of chromatin organization proteins"/>
</dbReference>
<dbReference type="Reactome" id="R-GGA-4570464">
    <property type="pathway name" value="SUMOylation of RNA binding proteins"/>
</dbReference>
<dbReference type="Reactome" id="R-GGA-4615885">
    <property type="pathway name" value="SUMOylation of DNA replication proteins"/>
</dbReference>
<dbReference type="Reactome" id="R-GGA-5693607">
    <property type="pathway name" value="Processing of DNA double-strand break ends"/>
</dbReference>
<dbReference type="Reactome" id="R-GGA-5696395">
    <property type="pathway name" value="Formation of Incision Complex in GG-NER"/>
</dbReference>
<dbReference type="PRO" id="PR:Q5ZJM9"/>
<dbReference type="Proteomes" id="UP000000539">
    <property type="component" value="Chromosome 18"/>
</dbReference>
<dbReference type="Bgee" id="ENSGALG00000007971">
    <property type="expression patterns" value="Expressed in spermatid and 12 other cell types or tissues"/>
</dbReference>
<dbReference type="GO" id="GO:0005634">
    <property type="term" value="C:nucleus"/>
    <property type="evidence" value="ECO:0000318"/>
    <property type="project" value="GO_Central"/>
</dbReference>
<dbReference type="GO" id="GO:0016605">
    <property type="term" value="C:PML body"/>
    <property type="evidence" value="ECO:0000250"/>
    <property type="project" value="UniProtKB"/>
</dbReference>
<dbReference type="GO" id="GO:0031386">
    <property type="term" value="F:protein tag activity"/>
    <property type="evidence" value="ECO:0000318"/>
    <property type="project" value="GO_Central"/>
</dbReference>
<dbReference type="GO" id="GO:0044389">
    <property type="term" value="F:ubiquitin-like protein ligase binding"/>
    <property type="evidence" value="ECO:0000318"/>
    <property type="project" value="GO_Central"/>
</dbReference>
<dbReference type="GO" id="GO:0016925">
    <property type="term" value="P:protein sumoylation"/>
    <property type="evidence" value="ECO:0000250"/>
    <property type="project" value="UniProtKB"/>
</dbReference>
<dbReference type="CDD" id="cd16115">
    <property type="entry name" value="Ubl_SUMO2_3_4"/>
    <property type="match status" value="1"/>
</dbReference>
<dbReference type="FunFam" id="3.10.20.90:FF:000482">
    <property type="entry name" value="Small ubiquitin-related modifier 2"/>
    <property type="match status" value="1"/>
</dbReference>
<dbReference type="Gene3D" id="3.10.20.90">
    <property type="entry name" value="Phosphatidylinositol 3-kinase Catalytic Subunit, Chain A, domain 1"/>
    <property type="match status" value="1"/>
</dbReference>
<dbReference type="InterPro" id="IPR022617">
    <property type="entry name" value="Rad60/SUMO-like_dom"/>
</dbReference>
<dbReference type="InterPro" id="IPR000626">
    <property type="entry name" value="Ubiquitin-like_dom"/>
</dbReference>
<dbReference type="InterPro" id="IPR029071">
    <property type="entry name" value="Ubiquitin-like_domsf"/>
</dbReference>
<dbReference type="PANTHER" id="PTHR10562">
    <property type="entry name" value="SMALL UBIQUITIN-RELATED MODIFIER"/>
    <property type="match status" value="1"/>
</dbReference>
<dbReference type="Pfam" id="PF11976">
    <property type="entry name" value="Rad60-SLD"/>
    <property type="match status" value="1"/>
</dbReference>
<dbReference type="SMART" id="SM00213">
    <property type="entry name" value="UBQ"/>
    <property type="match status" value="1"/>
</dbReference>
<dbReference type="SUPFAM" id="SSF54236">
    <property type="entry name" value="Ubiquitin-like"/>
    <property type="match status" value="1"/>
</dbReference>
<dbReference type="PROSITE" id="PS50053">
    <property type="entry name" value="UBIQUITIN_2"/>
    <property type="match status" value="1"/>
</dbReference>
<feature type="chain" id="PRO_0000269467" description="Small ubiquitin-related modifier 2">
    <location>
        <begin position="1"/>
        <end position="93"/>
    </location>
</feature>
<feature type="propeptide" id="PRO_0000269468" evidence="1">
    <location>
        <begin position="94"/>
        <end position="95"/>
    </location>
</feature>
<feature type="domain" description="Ubiquitin-like" evidence="2">
    <location>
        <begin position="16"/>
        <end position="95"/>
    </location>
</feature>
<feature type="cross-link" description="Glycyl lysine isopeptide (Lys-Gly) (interchain with G-Cter in SUMO)" evidence="1">
    <location>
        <position position="11"/>
    </location>
</feature>
<feature type="cross-link" description="Glycyl lysine isopeptide (Gly-Lys) (interchain with K-? in acceptor proteins)" evidence="2">
    <location>
        <position position="93"/>
    </location>
</feature>
<gene>
    <name type="primary">SUMO2</name>
    <name type="ORF">RCJMB04_17a7</name>
</gene>
<name>SUMO2_CHICK</name>
<proteinExistence type="inferred from homology"/>
<protein>
    <recommendedName>
        <fullName>Small ubiquitin-related modifier 2</fullName>
        <shortName>SUMO-2</shortName>
    </recommendedName>
</protein>
<evidence type="ECO:0000250" key="1"/>
<evidence type="ECO:0000255" key="2">
    <source>
        <dbReference type="PROSITE-ProRule" id="PRU00214"/>
    </source>
</evidence>
<evidence type="ECO:0000305" key="3"/>
<sequence>MADEKPKEGVKTENNDHINLKVAGQDGSVVQFKIKRHTPLSKLMKAYCERQGLSMRQIRFRFDGQPINETDTPAQLEMEDEDTIDVFQQQTGGVY</sequence>
<organism>
    <name type="scientific">Gallus gallus</name>
    <name type="common">Chicken</name>
    <dbReference type="NCBI Taxonomy" id="9031"/>
    <lineage>
        <taxon>Eukaryota</taxon>
        <taxon>Metazoa</taxon>
        <taxon>Chordata</taxon>
        <taxon>Craniata</taxon>
        <taxon>Vertebrata</taxon>
        <taxon>Euteleostomi</taxon>
        <taxon>Archelosauria</taxon>
        <taxon>Archosauria</taxon>
        <taxon>Dinosauria</taxon>
        <taxon>Saurischia</taxon>
        <taxon>Theropoda</taxon>
        <taxon>Coelurosauria</taxon>
        <taxon>Aves</taxon>
        <taxon>Neognathae</taxon>
        <taxon>Galloanserae</taxon>
        <taxon>Galliformes</taxon>
        <taxon>Phasianidae</taxon>
        <taxon>Phasianinae</taxon>
        <taxon>Gallus</taxon>
    </lineage>
</organism>
<accession>Q5ZJM9</accession>